<evidence type="ECO:0000255" key="1">
    <source>
        <dbReference type="HAMAP-Rule" id="MF_01964"/>
    </source>
</evidence>
<keyword id="KW-0129">CBS domain</keyword>
<keyword id="KW-0332">GMP biosynthesis</keyword>
<keyword id="KW-0479">Metal-binding</keyword>
<keyword id="KW-0520">NAD</keyword>
<keyword id="KW-0560">Oxidoreductase</keyword>
<keyword id="KW-0630">Potassium</keyword>
<keyword id="KW-0658">Purine biosynthesis</keyword>
<keyword id="KW-1185">Reference proteome</keyword>
<keyword id="KW-0677">Repeat</keyword>
<sequence>MRILQRALTFEDVLMVPRKSSVLPKDVSLKSRLTKNIRLNIPFISAAMDTVTEHKTAIAMARLGGIGIVHKNMDIQTQVKEITKVKKSESGVINDPIFIHAHRTLADAKVITDNYKISGVPVVDDKGLLIGILTNRDVRFETDLSKKVGDVMTKMPLVTAHVGISLDEASDLMHKHKIEKLPIVDKDNVLKGLITIKDIQKRIEYPEANKDDFGRLRVGAAIGVGQLDRAEMLVKAGVDALVLDSAHGHSANILHTLEEIKKSLVVDVIVGNVVTKEATSDLISAGADAIKVGIGPGSICTTRIVAGVGMPQVSAIDNCVEVASKFDIPVIADGGIRYSGDVAKALALGASSVMIGSLLAGTEESPGDFMIYQGRQYKSYRGMGSIGAMTKGSSDRYFQEGVASEKLVPEGIEGRVPYRGKVSDMIFQLVGGVRSSMGYQGAKNILELYQNAEFVEITSAGLKESHVHGVDITKEAPNYYG</sequence>
<proteinExistence type="inferred from homology"/>
<protein>
    <recommendedName>
        <fullName evidence="1">Inosine-5'-monophosphate dehydrogenase</fullName>
        <shortName evidence="1">IMP dehydrogenase</shortName>
        <shortName evidence="1">IMPD</shortName>
        <shortName evidence="1">IMPDH</shortName>
        <ecNumber evidence="1">1.1.1.205</ecNumber>
    </recommendedName>
</protein>
<comment type="function">
    <text evidence="1">Catalyzes the conversion of inosine 5'-phosphate (IMP) to xanthosine 5'-phosphate (XMP), the first committed and rate-limiting step in the de novo synthesis of guanine nucleotides, and therefore plays an important role in the regulation of cell growth.</text>
</comment>
<comment type="catalytic activity">
    <reaction evidence="1">
        <text>IMP + NAD(+) + H2O = XMP + NADH + H(+)</text>
        <dbReference type="Rhea" id="RHEA:11708"/>
        <dbReference type="ChEBI" id="CHEBI:15377"/>
        <dbReference type="ChEBI" id="CHEBI:15378"/>
        <dbReference type="ChEBI" id="CHEBI:57464"/>
        <dbReference type="ChEBI" id="CHEBI:57540"/>
        <dbReference type="ChEBI" id="CHEBI:57945"/>
        <dbReference type="ChEBI" id="CHEBI:58053"/>
        <dbReference type="EC" id="1.1.1.205"/>
    </reaction>
</comment>
<comment type="cofactor">
    <cofactor evidence="1">
        <name>K(+)</name>
        <dbReference type="ChEBI" id="CHEBI:29103"/>
    </cofactor>
</comment>
<comment type="activity regulation">
    <text evidence="1">Mycophenolic acid (MPA) is a non-competitive inhibitor that prevents formation of the closed enzyme conformation by binding to the same site as the amobile flap. In contrast, mizoribine monophosphate (MZP) is a competitive inhibitor that induces the closed conformation. MPA is a potent inhibitor of mammalian IMPDHs but a poor inhibitor of the bacterial enzymes. MZP is a more potent inhibitor of bacterial IMPDH.</text>
</comment>
<comment type="pathway">
    <text evidence="1">Purine metabolism; XMP biosynthesis via de novo pathway; XMP from IMP: step 1/1.</text>
</comment>
<comment type="subunit">
    <text evidence="1">Homotetramer.</text>
</comment>
<comment type="similarity">
    <text evidence="1">Belongs to the IMPDH/GMPR family.</text>
</comment>
<dbReference type="EC" id="1.1.1.205" evidence="1"/>
<dbReference type="EMBL" id="AE000511">
    <property type="protein sequence ID" value="AAD07879.1"/>
    <property type="molecule type" value="Genomic_DNA"/>
</dbReference>
<dbReference type="PIR" id="E64623">
    <property type="entry name" value="E64623"/>
</dbReference>
<dbReference type="RefSeq" id="NP_207622.1">
    <property type="nucleotide sequence ID" value="NC_000915.1"/>
</dbReference>
<dbReference type="RefSeq" id="WP_001221712.1">
    <property type="nucleotide sequence ID" value="NC_018939.1"/>
</dbReference>
<dbReference type="SMR" id="P56088"/>
<dbReference type="FunCoup" id="P56088">
    <property type="interactions" value="275"/>
</dbReference>
<dbReference type="IntAct" id="P56088">
    <property type="interactions" value="1"/>
</dbReference>
<dbReference type="MINT" id="P56088"/>
<dbReference type="STRING" id="85962.HP_0829"/>
<dbReference type="PaxDb" id="85962-C694_04250"/>
<dbReference type="EnsemblBacteria" id="AAD07879">
    <property type="protein sequence ID" value="AAD07879"/>
    <property type="gene ID" value="HP_0829"/>
</dbReference>
<dbReference type="KEGG" id="heo:C694_04250"/>
<dbReference type="KEGG" id="hpy:HP_0829"/>
<dbReference type="PATRIC" id="fig|85962.47.peg.884"/>
<dbReference type="eggNOG" id="COG0516">
    <property type="taxonomic scope" value="Bacteria"/>
</dbReference>
<dbReference type="eggNOG" id="COG0517">
    <property type="taxonomic scope" value="Bacteria"/>
</dbReference>
<dbReference type="InParanoid" id="P56088"/>
<dbReference type="OrthoDB" id="9805398at2"/>
<dbReference type="PhylomeDB" id="P56088"/>
<dbReference type="UniPathway" id="UPA00601">
    <property type="reaction ID" value="UER00295"/>
</dbReference>
<dbReference type="Proteomes" id="UP000000429">
    <property type="component" value="Chromosome"/>
</dbReference>
<dbReference type="GO" id="GO:0003938">
    <property type="term" value="F:IMP dehydrogenase activity"/>
    <property type="evidence" value="ECO:0000318"/>
    <property type="project" value="GO_Central"/>
</dbReference>
<dbReference type="GO" id="GO:0046872">
    <property type="term" value="F:metal ion binding"/>
    <property type="evidence" value="ECO:0007669"/>
    <property type="project" value="UniProtKB-UniRule"/>
</dbReference>
<dbReference type="GO" id="GO:0000166">
    <property type="term" value="F:nucleotide binding"/>
    <property type="evidence" value="ECO:0007669"/>
    <property type="project" value="UniProtKB-UniRule"/>
</dbReference>
<dbReference type="GO" id="GO:0006177">
    <property type="term" value="P:GMP biosynthetic process"/>
    <property type="evidence" value="ECO:0007669"/>
    <property type="project" value="UniProtKB-UniRule"/>
</dbReference>
<dbReference type="GO" id="GO:0006183">
    <property type="term" value="P:GTP biosynthetic process"/>
    <property type="evidence" value="ECO:0000318"/>
    <property type="project" value="GO_Central"/>
</dbReference>
<dbReference type="CDD" id="cd04601">
    <property type="entry name" value="CBS_pair_IMPDH"/>
    <property type="match status" value="1"/>
</dbReference>
<dbReference type="CDD" id="cd00381">
    <property type="entry name" value="IMPDH"/>
    <property type="match status" value="1"/>
</dbReference>
<dbReference type="FunFam" id="3.20.20.70:FF:000003">
    <property type="entry name" value="GMP reductase"/>
    <property type="match status" value="1"/>
</dbReference>
<dbReference type="Gene3D" id="3.20.20.70">
    <property type="entry name" value="Aldolase class I"/>
    <property type="match status" value="1"/>
</dbReference>
<dbReference type="HAMAP" id="MF_01964">
    <property type="entry name" value="IMPDH"/>
    <property type="match status" value="1"/>
</dbReference>
<dbReference type="InterPro" id="IPR013785">
    <property type="entry name" value="Aldolase_TIM"/>
</dbReference>
<dbReference type="InterPro" id="IPR000644">
    <property type="entry name" value="CBS_dom"/>
</dbReference>
<dbReference type="InterPro" id="IPR046342">
    <property type="entry name" value="CBS_dom_sf"/>
</dbReference>
<dbReference type="InterPro" id="IPR005990">
    <property type="entry name" value="IMP_DH"/>
</dbReference>
<dbReference type="InterPro" id="IPR015875">
    <property type="entry name" value="IMP_DH/GMP_Rdtase_CS"/>
</dbReference>
<dbReference type="InterPro" id="IPR001093">
    <property type="entry name" value="IMP_DH_GMPRt"/>
</dbReference>
<dbReference type="NCBIfam" id="TIGR01302">
    <property type="entry name" value="IMP_dehydrog"/>
    <property type="match status" value="1"/>
</dbReference>
<dbReference type="PANTHER" id="PTHR11911:SF111">
    <property type="entry name" value="INOSINE-5'-MONOPHOSPHATE DEHYDROGENASE"/>
    <property type="match status" value="1"/>
</dbReference>
<dbReference type="PANTHER" id="PTHR11911">
    <property type="entry name" value="INOSINE-5-MONOPHOSPHATE DEHYDROGENASE RELATED"/>
    <property type="match status" value="1"/>
</dbReference>
<dbReference type="Pfam" id="PF00571">
    <property type="entry name" value="CBS"/>
    <property type="match status" value="2"/>
</dbReference>
<dbReference type="Pfam" id="PF00478">
    <property type="entry name" value="IMPDH"/>
    <property type="match status" value="1"/>
</dbReference>
<dbReference type="PIRSF" id="PIRSF000130">
    <property type="entry name" value="IMPDH"/>
    <property type="match status" value="1"/>
</dbReference>
<dbReference type="SMART" id="SM00116">
    <property type="entry name" value="CBS"/>
    <property type="match status" value="2"/>
</dbReference>
<dbReference type="SMART" id="SM01240">
    <property type="entry name" value="IMPDH"/>
    <property type="match status" value="1"/>
</dbReference>
<dbReference type="SUPFAM" id="SSF54631">
    <property type="entry name" value="CBS-domain pair"/>
    <property type="match status" value="1"/>
</dbReference>
<dbReference type="SUPFAM" id="SSF51412">
    <property type="entry name" value="Inosine monophosphate dehydrogenase (IMPDH)"/>
    <property type="match status" value="1"/>
</dbReference>
<dbReference type="PROSITE" id="PS51371">
    <property type="entry name" value="CBS"/>
    <property type="match status" value="2"/>
</dbReference>
<dbReference type="PROSITE" id="PS00487">
    <property type="entry name" value="IMP_DH_GMP_RED"/>
    <property type="match status" value="1"/>
</dbReference>
<organism>
    <name type="scientific">Helicobacter pylori (strain ATCC 700392 / 26695)</name>
    <name type="common">Campylobacter pylori</name>
    <dbReference type="NCBI Taxonomy" id="85962"/>
    <lineage>
        <taxon>Bacteria</taxon>
        <taxon>Pseudomonadati</taxon>
        <taxon>Campylobacterota</taxon>
        <taxon>Epsilonproteobacteria</taxon>
        <taxon>Campylobacterales</taxon>
        <taxon>Helicobacteraceae</taxon>
        <taxon>Helicobacter</taxon>
    </lineage>
</organism>
<accession>P56088</accession>
<reference key="1">
    <citation type="journal article" date="1997" name="Nature">
        <title>The complete genome sequence of the gastric pathogen Helicobacter pylori.</title>
        <authorList>
            <person name="Tomb J.-F."/>
            <person name="White O."/>
            <person name="Kerlavage A.R."/>
            <person name="Clayton R.A."/>
            <person name="Sutton G.G."/>
            <person name="Fleischmann R.D."/>
            <person name="Ketchum K.A."/>
            <person name="Klenk H.-P."/>
            <person name="Gill S.R."/>
            <person name="Dougherty B.A."/>
            <person name="Nelson K.E."/>
            <person name="Quackenbush J."/>
            <person name="Zhou L."/>
            <person name="Kirkness E.F."/>
            <person name="Peterson S.N."/>
            <person name="Loftus B.J."/>
            <person name="Richardson D.L."/>
            <person name="Dodson R.J."/>
            <person name="Khalak H.G."/>
            <person name="Glodek A."/>
            <person name="McKenney K."/>
            <person name="FitzGerald L.M."/>
            <person name="Lee N."/>
            <person name="Adams M.D."/>
            <person name="Hickey E.K."/>
            <person name="Berg D.E."/>
            <person name="Gocayne J.D."/>
            <person name="Utterback T.R."/>
            <person name="Peterson J.D."/>
            <person name="Kelley J.M."/>
            <person name="Cotton M.D."/>
            <person name="Weidman J.F."/>
            <person name="Fujii C."/>
            <person name="Bowman C."/>
            <person name="Watthey L."/>
            <person name="Wallin E."/>
            <person name="Hayes W.S."/>
            <person name="Borodovsky M."/>
            <person name="Karp P.D."/>
            <person name="Smith H.O."/>
            <person name="Fraser C.M."/>
            <person name="Venter J.C."/>
        </authorList>
    </citation>
    <scope>NUCLEOTIDE SEQUENCE [LARGE SCALE GENOMIC DNA]</scope>
    <source>
        <strain>ATCC 700392 / 26695</strain>
    </source>
</reference>
<name>IMDH_HELPY</name>
<gene>
    <name evidence="1" type="primary">guaB</name>
    <name type="ordered locus">HP_0829</name>
</gene>
<feature type="chain" id="PRO_0000093698" description="Inosine-5'-monophosphate dehydrogenase">
    <location>
        <begin position="1"/>
        <end position="481"/>
    </location>
</feature>
<feature type="domain" description="CBS 1" evidence="1">
    <location>
        <begin position="92"/>
        <end position="148"/>
    </location>
</feature>
<feature type="domain" description="CBS 2" evidence="1">
    <location>
        <begin position="152"/>
        <end position="209"/>
    </location>
</feature>
<feature type="active site" description="Thioimidate intermediate" evidence="1">
    <location>
        <position position="300"/>
    </location>
</feature>
<feature type="active site" description="Proton acceptor" evidence="1">
    <location>
        <position position="396"/>
    </location>
</feature>
<feature type="binding site" evidence="1">
    <location>
        <position position="244"/>
    </location>
    <ligand>
        <name>NAD(+)</name>
        <dbReference type="ChEBI" id="CHEBI:57540"/>
    </ligand>
</feature>
<feature type="binding site" evidence="1">
    <location>
        <begin position="293"/>
        <end position="295"/>
    </location>
    <ligand>
        <name>NAD(+)</name>
        <dbReference type="ChEBI" id="CHEBI:57540"/>
    </ligand>
</feature>
<feature type="binding site" description="in other chain" evidence="1">
    <location>
        <position position="295"/>
    </location>
    <ligand>
        <name>K(+)</name>
        <dbReference type="ChEBI" id="CHEBI:29103"/>
        <note>ligand shared between two tetrameric partners</note>
    </ligand>
</feature>
<feature type="binding site" description="in other chain" evidence="1">
    <location>
        <position position="297"/>
    </location>
    <ligand>
        <name>K(+)</name>
        <dbReference type="ChEBI" id="CHEBI:29103"/>
        <note>ligand shared between two tetrameric partners</note>
    </ligand>
</feature>
<feature type="binding site" evidence="1">
    <location>
        <position position="298"/>
    </location>
    <ligand>
        <name>IMP</name>
        <dbReference type="ChEBI" id="CHEBI:58053"/>
    </ligand>
</feature>
<feature type="binding site" description="in other chain" evidence="1">
    <location>
        <position position="300"/>
    </location>
    <ligand>
        <name>K(+)</name>
        <dbReference type="ChEBI" id="CHEBI:29103"/>
        <note>ligand shared between two tetrameric partners</note>
    </ligand>
</feature>
<feature type="binding site" evidence="1">
    <location>
        <begin position="333"/>
        <end position="335"/>
    </location>
    <ligand>
        <name>IMP</name>
        <dbReference type="ChEBI" id="CHEBI:58053"/>
    </ligand>
</feature>
<feature type="binding site" evidence="1">
    <location>
        <begin position="356"/>
        <end position="357"/>
    </location>
    <ligand>
        <name>IMP</name>
        <dbReference type="ChEBI" id="CHEBI:58053"/>
    </ligand>
</feature>
<feature type="binding site" evidence="1">
    <location>
        <begin position="380"/>
        <end position="384"/>
    </location>
    <ligand>
        <name>IMP</name>
        <dbReference type="ChEBI" id="CHEBI:58053"/>
    </ligand>
</feature>
<feature type="binding site" evidence="1">
    <location>
        <position position="410"/>
    </location>
    <ligand>
        <name>IMP</name>
        <dbReference type="ChEBI" id="CHEBI:58053"/>
    </ligand>
</feature>
<feature type="binding site" evidence="1">
    <location>
        <position position="464"/>
    </location>
    <ligand>
        <name>K(+)</name>
        <dbReference type="ChEBI" id="CHEBI:29103"/>
        <note>ligand shared between two tetrameric partners</note>
    </ligand>
</feature>
<feature type="binding site" evidence="1">
    <location>
        <position position="465"/>
    </location>
    <ligand>
        <name>K(+)</name>
        <dbReference type="ChEBI" id="CHEBI:29103"/>
        <note>ligand shared between two tetrameric partners</note>
    </ligand>
</feature>
<feature type="binding site" evidence="1">
    <location>
        <position position="466"/>
    </location>
    <ligand>
        <name>K(+)</name>
        <dbReference type="ChEBI" id="CHEBI:29103"/>
        <note>ligand shared between two tetrameric partners</note>
    </ligand>
</feature>